<keyword id="KW-0963">Cytoplasm</keyword>
<keyword id="KW-0521">NADP</keyword>
<keyword id="KW-0560">Oxidoreductase</keyword>
<keyword id="KW-0671">Queuosine biosynthesis</keyword>
<feature type="chain" id="PRO_1000134281" description="NADPH-dependent 7-cyano-7-deazaguanine reductase">
    <location>
        <begin position="1"/>
        <end position="272"/>
    </location>
</feature>
<feature type="active site" description="Thioimide intermediate" evidence="1">
    <location>
        <position position="178"/>
    </location>
</feature>
<feature type="active site" description="Proton donor" evidence="1">
    <location>
        <position position="185"/>
    </location>
</feature>
<feature type="binding site" evidence="1">
    <location>
        <begin position="82"/>
        <end position="84"/>
    </location>
    <ligand>
        <name>substrate</name>
    </ligand>
</feature>
<feature type="binding site" evidence="1">
    <location>
        <begin position="84"/>
        <end position="85"/>
    </location>
    <ligand>
        <name>NADPH</name>
        <dbReference type="ChEBI" id="CHEBI:57783"/>
    </ligand>
</feature>
<feature type="binding site" evidence="1">
    <location>
        <begin position="217"/>
        <end position="218"/>
    </location>
    <ligand>
        <name>substrate</name>
    </ligand>
</feature>
<feature type="binding site" evidence="1">
    <location>
        <begin position="246"/>
        <end position="247"/>
    </location>
    <ligand>
        <name>NADPH</name>
        <dbReference type="ChEBI" id="CHEBI:57783"/>
    </ligand>
</feature>
<organism>
    <name type="scientific">Stenotrophomonas maltophilia (strain R551-3)</name>
    <dbReference type="NCBI Taxonomy" id="391008"/>
    <lineage>
        <taxon>Bacteria</taxon>
        <taxon>Pseudomonadati</taxon>
        <taxon>Pseudomonadota</taxon>
        <taxon>Gammaproteobacteria</taxon>
        <taxon>Lysobacterales</taxon>
        <taxon>Lysobacteraceae</taxon>
        <taxon>Stenotrophomonas</taxon>
        <taxon>Stenotrophomonas maltophilia group</taxon>
    </lineage>
</organism>
<comment type="function">
    <text evidence="1">Catalyzes the NADPH-dependent reduction of 7-cyano-7-deazaguanine (preQ0) to 7-aminomethyl-7-deazaguanine (preQ1).</text>
</comment>
<comment type="catalytic activity">
    <reaction evidence="1">
        <text>7-aminomethyl-7-carbaguanine + 2 NADP(+) = 7-cyano-7-deazaguanine + 2 NADPH + 3 H(+)</text>
        <dbReference type="Rhea" id="RHEA:13409"/>
        <dbReference type="ChEBI" id="CHEBI:15378"/>
        <dbReference type="ChEBI" id="CHEBI:45075"/>
        <dbReference type="ChEBI" id="CHEBI:57783"/>
        <dbReference type="ChEBI" id="CHEBI:58349"/>
        <dbReference type="ChEBI" id="CHEBI:58703"/>
        <dbReference type="EC" id="1.7.1.13"/>
    </reaction>
</comment>
<comment type="pathway">
    <text evidence="1">tRNA modification; tRNA-queuosine biosynthesis.</text>
</comment>
<comment type="subunit">
    <text evidence="1">Homodimer.</text>
</comment>
<comment type="subcellular location">
    <subcellularLocation>
        <location evidence="1">Cytoplasm</location>
    </subcellularLocation>
</comment>
<comment type="similarity">
    <text evidence="1">Belongs to the GTP cyclohydrolase I family. QueF type 2 subfamily.</text>
</comment>
<evidence type="ECO:0000255" key="1">
    <source>
        <dbReference type="HAMAP-Rule" id="MF_00817"/>
    </source>
</evidence>
<reference key="1">
    <citation type="submission" date="2008-06" db="EMBL/GenBank/DDBJ databases">
        <title>Complete sequence of Stenotrophomonas maltophilia R551-3.</title>
        <authorList>
            <consortium name="US DOE Joint Genome Institute"/>
            <person name="Lucas S."/>
            <person name="Copeland A."/>
            <person name="Lapidus A."/>
            <person name="Glavina del Rio T."/>
            <person name="Dalin E."/>
            <person name="Tice H."/>
            <person name="Pitluck S."/>
            <person name="Chain P."/>
            <person name="Malfatti S."/>
            <person name="Shin M."/>
            <person name="Vergez L."/>
            <person name="Lang D."/>
            <person name="Schmutz J."/>
            <person name="Larimer F."/>
            <person name="Land M."/>
            <person name="Hauser L."/>
            <person name="Kyrpides N."/>
            <person name="Mikhailova N."/>
            <person name="Taghavi S."/>
            <person name="Monchy S."/>
            <person name="Newman L."/>
            <person name="Vangronsveld J."/>
            <person name="van der Lelie D."/>
            <person name="Richardson P."/>
        </authorList>
    </citation>
    <scope>NUCLEOTIDE SEQUENCE [LARGE SCALE GENOMIC DNA]</scope>
    <source>
        <strain>R551-3</strain>
    </source>
</reference>
<gene>
    <name evidence="1" type="primary">queF</name>
    <name type="ordered locus">Smal_3687</name>
</gene>
<name>QUEF_STRM5</name>
<dbReference type="EC" id="1.7.1.13" evidence="1"/>
<dbReference type="EMBL" id="CP001111">
    <property type="protein sequence ID" value="ACF53386.1"/>
    <property type="molecule type" value="Genomic_DNA"/>
</dbReference>
<dbReference type="RefSeq" id="WP_012512296.1">
    <property type="nucleotide sequence ID" value="NC_011071.1"/>
</dbReference>
<dbReference type="SMR" id="B4SLB7"/>
<dbReference type="STRING" id="391008.Smal_3687"/>
<dbReference type="KEGG" id="smt:Smal_3687"/>
<dbReference type="eggNOG" id="COG0780">
    <property type="taxonomic scope" value="Bacteria"/>
</dbReference>
<dbReference type="eggNOG" id="COG2904">
    <property type="taxonomic scope" value="Bacteria"/>
</dbReference>
<dbReference type="HOGENOM" id="CLU_054738_0_0_6"/>
<dbReference type="OrthoDB" id="9789995at2"/>
<dbReference type="UniPathway" id="UPA00392"/>
<dbReference type="Proteomes" id="UP000001867">
    <property type="component" value="Chromosome"/>
</dbReference>
<dbReference type="GO" id="GO:0005737">
    <property type="term" value="C:cytoplasm"/>
    <property type="evidence" value="ECO:0007669"/>
    <property type="project" value="UniProtKB-SubCell"/>
</dbReference>
<dbReference type="GO" id="GO:0033739">
    <property type="term" value="F:preQ1 synthase activity"/>
    <property type="evidence" value="ECO:0007669"/>
    <property type="project" value="UniProtKB-UniRule"/>
</dbReference>
<dbReference type="GO" id="GO:0008616">
    <property type="term" value="P:queuosine biosynthetic process"/>
    <property type="evidence" value="ECO:0007669"/>
    <property type="project" value="UniProtKB-UniRule"/>
</dbReference>
<dbReference type="GO" id="GO:0006400">
    <property type="term" value="P:tRNA modification"/>
    <property type="evidence" value="ECO:0007669"/>
    <property type="project" value="UniProtKB-UniRule"/>
</dbReference>
<dbReference type="Gene3D" id="3.30.1130.10">
    <property type="match status" value="2"/>
</dbReference>
<dbReference type="HAMAP" id="MF_00817">
    <property type="entry name" value="QueF_type2"/>
    <property type="match status" value="1"/>
</dbReference>
<dbReference type="InterPro" id="IPR043133">
    <property type="entry name" value="GTP-CH-I_C/QueF"/>
</dbReference>
<dbReference type="InterPro" id="IPR050084">
    <property type="entry name" value="NADPH_dep_7-cyano-7-deazaG_red"/>
</dbReference>
<dbReference type="InterPro" id="IPR029500">
    <property type="entry name" value="QueF"/>
</dbReference>
<dbReference type="InterPro" id="IPR029139">
    <property type="entry name" value="QueF_N"/>
</dbReference>
<dbReference type="InterPro" id="IPR016428">
    <property type="entry name" value="QueF_type2"/>
</dbReference>
<dbReference type="NCBIfam" id="TIGR03138">
    <property type="entry name" value="QueF"/>
    <property type="match status" value="1"/>
</dbReference>
<dbReference type="PANTHER" id="PTHR34354">
    <property type="entry name" value="NADPH-DEPENDENT 7-CYANO-7-DEAZAGUANINE REDUCTASE"/>
    <property type="match status" value="1"/>
</dbReference>
<dbReference type="PANTHER" id="PTHR34354:SF1">
    <property type="entry name" value="NADPH-DEPENDENT 7-CYANO-7-DEAZAGUANINE REDUCTASE"/>
    <property type="match status" value="1"/>
</dbReference>
<dbReference type="Pfam" id="PF14489">
    <property type="entry name" value="QueF"/>
    <property type="match status" value="1"/>
</dbReference>
<dbReference type="Pfam" id="PF14819">
    <property type="entry name" value="QueF_N"/>
    <property type="match status" value="1"/>
</dbReference>
<dbReference type="PIRSF" id="PIRSF004750">
    <property type="entry name" value="Nitrile_oxidored_YqcD_prd"/>
    <property type="match status" value="1"/>
</dbReference>
<dbReference type="SUPFAM" id="SSF55620">
    <property type="entry name" value="Tetrahydrobiopterin biosynthesis enzymes-like"/>
    <property type="match status" value="1"/>
</dbReference>
<accession>B4SLB7</accession>
<sequence length="272" mass="30029">MNTPQDSSLGREVSYPSQYDPGLLFPIPRSGARAEIGLDDAALPFVGHDRWHAFELSWLDPRGKPQVAVATVQVPCTSPRLIESKSFKLYLNSLNSTRIDSVEALRERLVTDLSACAGAPVQVAFGLPGLRETPLGESIDGLDVDIDCYGPPQADFLAADTSQVVEETLVSALLKSNCPVTGQPDWATVSLRYCGPKIDRAGLLRYLVSYREHAEFHEQCVERIFSEVSARCQPQWLEVEARYTRRGGLDINPWRASPGITAPAATYRELRQ</sequence>
<proteinExistence type="inferred from homology"/>
<protein>
    <recommendedName>
        <fullName evidence="1">NADPH-dependent 7-cyano-7-deazaguanine reductase</fullName>
        <ecNumber evidence="1">1.7.1.13</ecNumber>
    </recommendedName>
    <alternativeName>
        <fullName evidence="1">7-cyano-7-carbaguanine reductase</fullName>
    </alternativeName>
    <alternativeName>
        <fullName evidence="1">NADPH-dependent nitrile oxidoreductase</fullName>
    </alternativeName>
    <alternativeName>
        <fullName evidence="1">PreQ(0) reductase</fullName>
    </alternativeName>
</protein>